<keyword id="KW-0963">Cytoplasm</keyword>
<keyword id="KW-0274">FAD</keyword>
<keyword id="KW-0285">Flavoprotein</keyword>
<keyword id="KW-0520">NAD</keyword>
<keyword id="KW-0819">tRNA processing</keyword>
<comment type="function">
    <text evidence="1">NAD-binding protein involved in the addition of a carboxymethylaminomethyl (cmnm) group at the wobble position (U34) of certain tRNAs, forming tRNA-cmnm(5)s(2)U34.</text>
</comment>
<comment type="cofactor">
    <cofactor evidence="1">
        <name>FAD</name>
        <dbReference type="ChEBI" id="CHEBI:57692"/>
    </cofactor>
</comment>
<comment type="subunit">
    <text evidence="1">Homodimer. Heterotetramer of two MnmE and two MnmG subunits.</text>
</comment>
<comment type="subcellular location">
    <subcellularLocation>
        <location evidence="1">Cytoplasm</location>
    </subcellularLocation>
</comment>
<comment type="similarity">
    <text evidence="1">Belongs to the MnmG family.</text>
</comment>
<name>MNMG_TREPS</name>
<reference key="1">
    <citation type="journal article" date="2008" name="BMC Microbiol.">
        <title>Complete genome sequence of Treponema pallidum ssp. pallidum strain SS14 determined with oligonucleotide arrays.</title>
        <authorList>
            <person name="Matejkova P."/>
            <person name="Strouhal M."/>
            <person name="Smajs D."/>
            <person name="Norris S.J."/>
            <person name="Palzkill T."/>
            <person name="Petrosino J.F."/>
            <person name="Sodergren E."/>
            <person name="Norton J.E."/>
            <person name="Singh J."/>
            <person name="Richmond T.A."/>
            <person name="Molla M.N."/>
            <person name="Albert T.J."/>
            <person name="Weinstock G.M."/>
        </authorList>
    </citation>
    <scope>NUCLEOTIDE SEQUENCE [LARGE SCALE GENOMIC DNA]</scope>
    <source>
        <strain>SS14</strain>
    </source>
</reference>
<protein>
    <recommendedName>
        <fullName evidence="1">tRNA uridine 5-carboxymethylaminomethyl modification enzyme MnmG</fullName>
    </recommendedName>
    <alternativeName>
        <fullName evidence="1">Glucose-inhibited division protein A</fullName>
    </alternativeName>
</protein>
<evidence type="ECO:0000255" key="1">
    <source>
        <dbReference type="HAMAP-Rule" id="MF_00129"/>
    </source>
</evidence>
<sequence>MGFRFSDYDVIVVGGGHAGAEAALAAARMGEHTLLITQTIDSIGRLSCNPSIGGISKGNIVREIDALGGEMGKFADACMIQYRLLNKSRGPAVQAPRIQADKFLYAQKVKYTLECTQHLHLYQDTVVDVVCSNTTDAGYVAYGAAHAVVTARGRRISARAVVLTTGTFMEGRVYIGEYEAPEGRLGEHAAEGLGAALRKKGFQMGRLKTGTPARVLRKSVDLSVMEKQEADAIMRPFSFAHVEINRPHADCYINYTNERTHQLIRENFHRSPFFSGRIKAVGTRYCPSIEDKVRKFPDRIRHQLYIEPEGLDTEELYINGLSSCLPEDIQDEMIRTIPGMERAVITRPAYAVDYAVLFPVQLGIDLQTKRVSGLFSAGQINGTSGYEEAGGQGIIAGINAALYARSTKTKEEYHPFVLKRDEAYIGVMIDDLVTQGIDEPYRMFTARAEYRLKLRHDTADERLTEKAYAIGLQKKSAVETLQKKMRTKHEILHLLQTNKVSLTHANAYVQLKPHIGKSFAATLRDPVIPLGLIASLNEQIAQFPLEVFQSVGVEIRYEHYIAAQDQRIAQVEKMEGIKIPAHFDYARISGLSVESRTRLEHVRPDTIGQVGRMRGIRPSDVMLLLAHLKR</sequence>
<proteinExistence type="inferred from homology"/>
<dbReference type="EMBL" id="CP000805">
    <property type="protein sequence ID" value="ACD70471.1"/>
    <property type="molecule type" value="Genomic_DNA"/>
</dbReference>
<dbReference type="RefSeq" id="WP_010881493.1">
    <property type="nucleotide sequence ID" value="NC_021508.1"/>
</dbReference>
<dbReference type="SMR" id="B2S1Z2"/>
<dbReference type="GeneID" id="93875840"/>
<dbReference type="KEGG" id="tpp:TPASS_0044"/>
<dbReference type="PATRIC" id="fig|455434.6.peg.40"/>
<dbReference type="Proteomes" id="UP000001202">
    <property type="component" value="Chromosome"/>
</dbReference>
<dbReference type="GO" id="GO:0005829">
    <property type="term" value="C:cytosol"/>
    <property type="evidence" value="ECO:0007669"/>
    <property type="project" value="TreeGrafter"/>
</dbReference>
<dbReference type="GO" id="GO:0050660">
    <property type="term" value="F:flavin adenine dinucleotide binding"/>
    <property type="evidence" value="ECO:0007669"/>
    <property type="project" value="UniProtKB-UniRule"/>
</dbReference>
<dbReference type="GO" id="GO:0030488">
    <property type="term" value="P:tRNA methylation"/>
    <property type="evidence" value="ECO:0007669"/>
    <property type="project" value="TreeGrafter"/>
</dbReference>
<dbReference type="GO" id="GO:0002098">
    <property type="term" value="P:tRNA wobble uridine modification"/>
    <property type="evidence" value="ECO:0007669"/>
    <property type="project" value="InterPro"/>
</dbReference>
<dbReference type="FunFam" id="1.10.150.570:FF:000001">
    <property type="entry name" value="tRNA uridine 5-carboxymethylaminomethyl modification enzyme MnmG"/>
    <property type="match status" value="1"/>
</dbReference>
<dbReference type="FunFam" id="3.50.50.60:FF:000002">
    <property type="entry name" value="tRNA uridine 5-carboxymethylaminomethyl modification enzyme MnmG"/>
    <property type="match status" value="1"/>
</dbReference>
<dbReference type="Gene3D" id="3.50.50.60">
    <property type="entry name" value="FAD/NAD(P)-binding domain"/>
    <property type="match status" value="2"/>
</dbReference>
<dbReference type="Gene3D" id="1.10.150.570">
    <property type="entry name" value="GidA associated domain, C-terminal subdomain"/>
    <property type="match status" value="1"/>
</dbReference>
<dbReference type="HAMAP" id="MF_00129">
    <property type="entry name" value="MnmG_GidA"/>
    <property type="match status" value="1"/>
</dbReference>
<dbReference type="InterPro" id="IPR036188">
    <property type="entry name" value="FAD/NAD-bd_sf"/>
</dbReference>
<dbReference type="InterPro" id="IPR049312">
    <property type="entry name" value="GIDA_C_N"/>
</dbReference>
<dbReference type="InterPro" id="IPR004416">
    <property type="entry name" value="MnmG"/>
</dbReference>
<dbReference type="InterPro" id="IPR002218">
    <property type="entry name" value="MnmG-rel"/>
</dbReference>
<dbReference type="InterPro" id="IPR020595">
    <property type="entry name" value="MnmG-rel_CS"/>
</dbReference>
<dbReference type="InterPro" id="IPR026904">
    <property type="entry name" value="MnmG_C"/>
</dbReference>
<dbReference type="InterPro" id="IPR047001">
    <property type="entry name" value="MnmG_C_subdom"/>
</dbReference>
<dbReference type="InterPro" id="IPR044920">
    <property type="entry name" value="MnmG_C_subdom_sf"/>
</dbReference>
<dbReference type="InterPro" id="IPR040131">
    <property type="entry name" value="MnmG_N"/>
</dbReference>
<dbReference type="NCBIfam" id="TIGR00136">
    <property type="entry name" value="mnmG_gidA"/>
    <property type="match status" value="1"/>
</dbReference>
<dbReference type="PANTHER" id="PTHR11806">
    <property type="entry name" value="GLUCOSE INHIBITED DIVISION PROTEIN A"/>
    <property type="match status" value="1"/>
</dbReference>
<dbReference type="PANTHER" id="PTHR11806:SF0">
    <property type="entry name" value="PROTEIN MTO1 HOMOLOG, MITOCHONDRIAL"/>
    <property type="match status" value="1"/>
</dbReference>
<dbReference type="Pfam" id="PF01134">
    <property type="entry name" value="GIDA"/>
    <property type="match status" value="1"/>
</dbReference>
<dbReference type="Pfam" id="PF21680">
    <property type="entry name" value="GIDA_C_1st"/>
    <property type="match status" value="1"/>
</dbReference>
<dbReference type="Pfam" id="PF13932">
    <property type="entry name" value="SAM_GIDA_C"/>
    <property type="match status" value="1"/>
</dbReference>
<dbReference type="SMART" id="SM01228">
    <property type="entry name" value="GIDA_assoc_3"/>
    <property type="match status" value="1"/>
</dbReference>
<dbReference type="SUPFAM" id="SSF51905">
    <property type="entry name" value="FAD/NAD(P)-binding domain"/>
    <property type="match status" value="1"/>
</dbReference>
<dbReference type="PROSITE" id="PS01280">
    <property type="entry name" value="GIDA_1"/>
    <property type="match status" value="1"/>
</dbReference>
<dbReference type="PROSITE" id="PS01281">
    <property type="entry name" value="GIDA_2"/>
    <property type="match status" value="1"/>
</dbReference>
<accession>B2S1Z2</accession>
<gene>
    <name evidence="1" type="primary">mnmG</name>
    <name evidence="1" type="synonym">gidA</name>
    <name type="ordered locus">TPASS_0044</name>
</gene>
<feature type="chain" id="PRO_1000095668" description="tRNA uridine 5-carboxymethylaminomethyl modification enzyme MnmG">
    <location>
        <begin position="1"/>
        <end position="630"/>
    </location>
</feature>
<feature type="binding site" evidence="1">
    <location>
        <begin position="14"/>
        <end position="19"/>
    </location>
    <ligand>
        <name>FAD</name>
        <dbReference type="ChEBI" id="CHEBI:57692"/>
    </ligand>
</feature>
<feature type="binding site" evidence="1">
    <location>
        <begin position="282"/>
        <end position="296"/>
    </location>
    <ligand>
        <name>NAD(+)</name>
        <dbReference type="ChEBI" id="CHEBI:57540"/>
    </ligand>
</feature>
<organism>
    <name type="scientific">Treponema pallidum subsp. pallidum (strain SS14)</name>
    <dbReference type="NCBI Taxonomy" id="455434"/>
    <lineage>
        <taxon>Bacteria</taxon>
        <taxon>Pseudomonadati</taxon>
        <taxon>Spirochaetota</taxon>
        <taxon>Spirochaetia</taxon>
        <taxon>Spirochaetales</taxon>
        <taxon>Treponemataceae</taxon>
        <taxon>Treponema</taxon>
    </lineage>
</organism>